<feature type="signal peptide" evidence="6">
    <location>
        <begin position="1"/>
        <end position="20"/>
    </location>
</feature>
<feature type="chain" id="PRO_0000239428" description="Integrin beta-1">
    <location>
        <begin position="21"/>
        <end position="798"/>
    </location>
</feature>
<feature type="transmembrane region" description="Helical" evidence="6">
    <location>
        <begin position="729"/>
        <end position="749"/>
    </location>
</feature>
<feature type="domain" description="PSI" evidence="6">
    <location>
        <begin position="26"/>
        <end position="76"/>
    </location>
</feature>
<feature type="domain" description="VWFA" evidence="2">
    <location>
        <begin position="140"/>
        <end position="378"/>
    </location>
</feature>
<feature type="domain" description="I-EGF 1" evidence="7">
    <location>
        <begin position="466"/>
        <end position="501"/>
    </location>
</feature>
<feature type="domain" description="I-EGF 2" evidence="7">
    <location>
        <begin position="502"/>
        <end position="554"/>
    </location>
</feature>
<feature type="domain" description="I-EGF 3" evidence="7">
    <location>
        <begin position="555"/>
        <end position="591"/>
    </location>
</feature>
<feature type="domain" description="I-EGF 4" evidence="7">
    <location>
        <begin position="592"/>
        <end position="631"/>
    </location>
</feature>
<feature type="region of interest" description="Disordered" evidence="8">
    <location>
        <begin position="75"/>
        <end position="107"/>
    </location>
</feature>
<feature type="region of interest" description="CX3CL1-binding" evidence="3">
    <location>
        <begin position="207"/>
        <end position="213"/>
    </location>
</feature>
<feature type="region of interest" description="CX3CL1-binding" evidence="3">
    <location>
        <begin position="295"/>
        <end position="314"/>
    </location>
</feature>
<feature type="region of interest" description="Interaction with TMEM182" evidence="4">
    <location>
        <begin position="383"/>
        <end position="465"/>
    </location>
</feature>
<feature type="region of interest" description="Signal for sorting from recycling endosomes; interaction with ACAP1" evidence="1">
    <location>
        <begin position="762"/>
        <end position="767"/>
    </location>
</feature>
<feature type="region of interest" description="Interaction with ITGB1BP1" evidence="1">
    <location>
        <begin position="785"/>
        <end position="792"/>
    </location>
</feature>
<feature type="compositionally biased region" description="Basic and acidic residues" evidence="8">
    <location>
        <begin position="81"/>
        <end position="91"/>
    </location>
</feature>
<feature type="binding site" description="in MIDAS binding site" evidence="3">
    <location>
        <position position="152"/>
    </location>
    <ligand>
        <name>Mg(2+)</name>
        <dbReference type="ChEBI" id="CHEBI:18420"/>
    </ligand>
</feature>
<feature type="binding site" description="in ADMIDAS binding site" evidence="3">
    <location>
        <position position="154"/>
    </location>
    <ligand>
        <name>Ca(2+)</name>
        <dbReference type="ChEBI" id="CHEBI:29108"/>
        <label>1</label>
    </ligand>
</feature>
<feature type="binding site" description="in MIDAS binding site" evidence="3">
    <location>
        <position position="154"/>
    </location>
    <ligand>
        <name>Mg(2+)</name>
        <dbReference type="ChEBI" id="CHEBI:18420"/>
    </ligand>
</feature>
<feature type="binding site" description="in ADMIDAS binding site" evidence="3">
    <location>
        <position position="157"/>
    </location>
    <ligand>
        <name>Ca(2+)</name>
        <dbReference type="ChEBI" id="CHEBI:29108"/>
        <label>1</label>
    </ligand>
</feature>
<feature type="binding site" description="in ADMIDAS binding site" evidence="3">
    <location>
        <position position="158"/>
    </location>
    <ligand>
        <name>Ca(2+)</name>
        <dbReference type="ChEBI" id="CHEBI:29108"/>
        <label>1</label>
    </ligand>
</feature>
<feature type="binding site" description="in LIMBS binding site" evidence="3">
    <location>
        <position position="189"/>
    </location>
    <ligand>
        <name>Ca(2+)</name>
        <dbReference type="ChEBI" id="CHEBI:29108"/>
        <label>2</label>
    </ligand>
</feature>
<feature type="binding site" description="in LIMBS binding site" evidence="3">
    <location>
        <position position="244"/>
    </location>
    <ligand>
        <name>Ca(2+)</name>
        <dbReference type="ChEBI" id="CHEBI:29108"/>
        <label>2</label>
    </ligand>
</feature>
<feature type="binding site" description="in LIMBS binding site" evidence="3">
    <location>
        <position position="246"/>
    </location>
    <ligand>
        <name>Ca(2+)</name>
        <dbReference type="ChEBI" id="CHEBI:29108"/>
        <label>2</label>
    </ligand>
</feature>
<feature type="binding site" description="in LIMBS binding site" evidence="3">
    <location>
        <position position="248"/>
    </location>
    <ligand>
        <name>Ca(2+)</name>
        <dbReference type="ChEBI" id="CHEBI:29108"/>
        <label>2</label>
    </ligand>
</feature>
<feature type="binding site" description="in LIMBS binding site" evidence="3">
    <location>
        <position position="249"/>
    </location>
    <ligand>
        <name>Ca(2+)</name>
        <dbReference type="ChEBI" id="CHEBI:29108"/>
        <label>2</label>
    </ligand>
</feature>
<feature type="binding site" description="in MIDAS binding site" evidence="3">
    <location>
        <position position="249"/>
    </location>
    <ligand>
        <name>Mg(2+)</name>
        <dbReference type="ChEBI" id="CHEBI:18420"/>
    </ligand>
</feature>
<feature type="binding site" description="in ADMIDAS binding site" evidence="3">
    <location>
        <position position="362"/>
    </location>
    <ligand>
        <name>Ca(2+)</name>
        <dbReference type="ChEBI" id="CHEBI:29108"/>
        <label>1</label>
    </ligand>
</feature>
<feature type="modified residue" description="Phosphothreonine" evidence="3">
    <location>
        <position position="777"/>
    </location>
</feature>
<feature type="modified residue" description="Phosphotyrosine" evidence="3">
    <location>
        <position position="783"/>
    </location>
</feature>
<feature type="modified residue" description="Phosphoserine" evidence="3">
    <location>
        <position position="785"/>
    </location>
</feature>
<feature type="modified residue" description="Phosphothreonine" evidence="3">
    <location>
        <position position="789"/>
    </location>
</feature>
<feature type="modified residue" description="N6-acetyllysine; alternate" evidence="3">
    <location>
        <position position="794"/>
    </location>
</feature>
<feature type="glycosylation site" description="N-linked (GlcNAc...) asparagine" evidence="6">
    <location>
        <position position="50"/>
    </location>
</feature>
<feature type="glycosylation site" description="N-linked (GlcNAc...) asparagine" evidence="6">
    <location>
        <position position="94"/>
    </location>
</feature>
<feature type="glycosylation site" description="N-linked (GlcNAc...) asparagine" evidence="6">
    <location>
        <position position="97"/>
    </location>
</feature>
<feature type="glycosylation site" description="N-linked (GlcNAc...) asparagine" evidence="6">
    <location>
        <position position="212"/>
    </location>
</feature>
<feature type="glycosylation site" description="N-linked (GlcNAc...) asparagine" evidence="6">
    <location>
        <position position="269"/>
    </location>
</feature>
<feature type="glycosylation site" description="N-linked (GlcNAc...) asparagine" evidence="6">
    <location>
        <position position="363"/>
    </location>
</feature>
<feature type="glycosylation site" description="N-linked (GlcNAc...) asparagine" evidence="6">
    <location>
        <position position="406"/>
    </location>
</feature>
<feature type="glycosylation site" description="N-linked (GlcNAc...) asparagine" evidence="6">
    <location>
        <position position="417"/>
    </location>
</feature>
<feature type="glycosylation site" description="N-linked (GlcNAc...) asparagine" evidence="6">
    <location>
        <position position="481"/>
    </location>
</feature>
<feature type="glycosylation site" description="N-linked (GlcNAc...) asparagine" evidence="6">
    <location>
        <position position="520"/>
    </location>
</feature>
<feature type="glycosylation site" description="N-linked (GlcNAc...) asparagine" evidence="6">
    <location>
        <position position="584"/>
    </location>
</feature>
<feature type="glycosylation site" description="N-linked (GlcNAc...) asparagine" evidence="6">
    <location>
        <position position="669"/>
    </location>
</feature>
<feature type="disulfide bond" evidence="3">
    <location>
        <begin position="27"/>
        <end position="45"/>
    </location>
</feature>
<feature type="disulfide bond" evidence="3">
    <location>
        <begin position="35"/>
        <end position="464"/>
    </location>
</feature>
<feature type="disulfide bond" evidence="3">
    <location>
        <begin position="38"/>
        <end position="64"/>
    </location>
</feature>
<feature type="disulfide bond" evidence="3">
    <location>
        <begin position="48"/>
        <end position="75"/>
    </location>
</feature>
<feature type="disulfide bond" evidence="3">
    <location>
        <begin position="207"/>
        <end position="213"/>
    </location>
</feature>
<feature type="disulfide bond" evidence="3">
    <location>
        <begin position="261"/>
        <end position="301"/>
    </location>
</feature>
<feature type="disulfide bond" evidence="3">
    <location>
        <begin position="401"/>
        <end position="415"/>
    </location>
</feature>
<feature type="disulfide bond" evidence="3">
    <location>
        <begin position="435"/>
        <end position="462"/>
    </location>
</feature>
<feature type="disulfide bond" evidence="7">
    <location>
        <begin position="466"/>
        <end position="486"/>
    </location>
</feature>
<feature type="disulfide bond" evidence="7">
    <location>
        <begin position="477"/>
        <end position="489"/>
    </location>
</feature>
<feature type="disulfide bond" evidence="7">
    <location>
        <begin position="491"/>
        <end position="500"/>
    </location>
</feature>
<feature type="disulfide bond" evidence="7">
    <location>
        <begin position="502"/>
        <end position="533"/>
    </location>
</feature>
<feature type="disulfide bond" evidence="7">
    <location>
        <begin position="516"/>
        <end position="531"/>
    </location>
</feature>
<feature type="disulfide bond" evidence="7">
    <location>
        <begin position="525"/>
        <end position="536"/>
    </location>
</feature>
<feature type="disulfide bond" evidence="7">
    <location>
        <begin position="538"/>
        <end position="553"/>
    </location>
</feature>
<feature type="disulfide bond" evidence="7">
    <location>
        <begin position="555"/>
        <end position="576"/>
    </location>
</feature>
<feature type="disulfide bond" evidence="7">
    <location>
        <begin position="560"/>
        <end position="574"/>
    </location>
</feature>
<feature type="disulfide bond" evidence="7">
    <location>
        <begin position="568"/>
        <end position="579"/>
    </location>
</feature>
<feature type="disulfide bond" evidence="7">
    <location>
        <begin position="581"/>
        <end position="590"/>
    </location>
</feature>
<feature type="disulfide bond" evidence="7">
    <location>
        <begin position="592"/>
        <end position="615"/>
    </location>
</feature>
<feature type="disulfide bond" evidence="7">
    <location>
        <begin position="599"/>
        <end position="613"/>
    </location>
</feature>
<feature type="disulfide bond" evidence="7">
    <location>
        <begin position="607"/>
        <end position="618"/>
    </location>
</feature>
<feature type="disulfide bond" evidence="7">
    <location>
        <begin position="620"/>
        <end position="630"/>
    </location>
</feature>
<feature type="disulfide bond" evidence="3">
    <location>
        <begin position="633"/>
        <end position="636"/>
    </location>
</feature>
<feature type="disulfide bond" evidence="3">
    <location>
        <begin position="640"/>
        <end position="691"/>
    </location>
</feature>
<feature type="disulfide bond" evidence="3">
    <location>
        <begin position="646"/>
        <end position="665"/>
    </location>
</feature>
<feature type="disulfide bond" evidence="3">
    <location>
        <begin position="649"/>
        <end position="661"/>
    </location>
</feature>
<feature type="disulfide bond" evidence="3">
    <location>
        <begin position="699"/>
        <end position="723"/>
    </location>
</feature>
<feature type="cross-link" description="Glycyl lysine isopeptide (Lys-Gly) (interchain with G-Cter in SUMO1); alternate" evidence="3">
    <location>
        <position position="794"/>
    </location>
</feature>
<keyword id="KW-0007">Acetylation</keyword>
<keyword id="KW-0106">Calcium</keyword>
<keyword id="KW-0130">Cell adhesion</keyword>
<keyword id="KW-0965">Cell junction</keyword>
<keyword id="KW-1003">Cell membrane</keyword>
<keyword id="KW-0966">Cell projection</keyword>
<keyword id="KW-1015">Disulfide bond</keyword>
<keyword id="KW-0245">EGF-like domain</keyword>
<keyword id="KW-0967">Endosome</keyword>
<keyword id="KW-0325">Glycoprotein</keyword>
<keyword id="KW-0401">Integrin</keyword>
<keyword id="KW-1017">Isopeptide bond</keyword>
<keyword id="KW-0460">Magnesium</keyword>
<keyword id="KW-0472">Membrane</keyword>
<keyword id="KW-0479">Metal-binding</keyword>
<keyword id="KW-0517">Myogenesis</keyword>
<keyword id="KW-0597">Phosphoprotein</keyword>
<keyword id="KW-0675">Receptor</keyword>
<keyword id="KW-1185">Reference proteome</keyword>
<keyword id="KW-0677">Repeat</keyword>
<keyword id="KW-0732">Signal</keyword>
<keyword id="KW-0812">Transmembrane</keyword>
<keyword id="KW-1133">Transmembrane helix</keyword>
<keyword id="KW-0832">Ubl conjugation</keyword>
<evidence type="ECO:0000250" key="1"/>
<evidence type="ECO:0000250" key="2">
    <source>
        <dbReference type="UniProtKB" id="P05106"/>
    </source>
</evidence>
<evidence type="ECO:0000250" key="3">
    <source>
        <dbReference type="UniProtKB" id="P05556"/>
    </source>
</evidence>
<evidence type="ECO:0000250" key="4">
    <source>
        <dbReference type="UniProtKB" id="P07228"/>
    </source>
</evidence>
<evidence type="ECO:0000250" key="5">
    <source>
        <dbReference type="UniProtKB" id="P09055"/>
    </source>
</evidence>
<evidence type="ECO:0000255" key="6"/>
<evidence type="ECO:0000255" key="7">
    <source>
        <dbReference type="PROSITE-ProRule" id="PRU01392"/>
    </source>
</evidence>
<evidence type="ECO:0000256" key="8">
    <source>
        <dbReference type="SAM" id="MobiDB-lite"/>
    </source>
</evidence>
<evidence type="ECO:0000305" key="9"/>
<comment type="function">
    <text evidence="3 4 5">Integrins alpha-1/beta-1, alpha-2/beta-1, alpha-10/beta-1 and alpha-11/beta-1 are receptors for collagen. Integrins alpha-1/beta-1 and alpha-2/beta-2 recognize the proline-hydroxylated sequence G-F-P-G-E-R in collagen. Integrins alpha-2/beta-1, alpha-3/beta-1, alpha-4/beta-1, alpha-5/beta-1, alpha-8/beta-1, alpha-10/beta-1, alpha-11/beta-1 and alpha-V/beta-1 are receptors for fibronectin. Alpha-4/beta-1 recognizes one or more domains within the alternatively spliced CS-1 and CS-5 regions of fibronectin. Integrin alpha-5/beta-1 is a receptor for fibrinogen. Integrin alpha-1/beta-1, alpha-2/beta-1, alpha-6/beta-1 and alpha-7/beta-1 are receptors for lamimin. Integrin alpha-6/beta-1 (ITGA6:ITGB1) is present in oocytes and is involved in sperm-egg fusion. Integrin alpha-4/beta-1 is a receptor for VCAM1 and recognizes the sequence Q-I-D-S in VCAM1. Integrin alpha-9/beta-1 is a receptor for VCAM1, cytotactin and osteopontin. It recognizes the sequence A-E-I-D-G-I-E-L in cytotactin. Integrin alpha-3/beta-1 is a receptor for epiligrin, thrombospondin and CSPG4. Integrin alpha-3/beta-1 provides a docking site for FAP (seprase) at invadopodia plasma membranes in a collagen-dependent manner and hence may participate in the adhesion, formation of invadopodia and matrix degradation processes, promoting cell invasion. Alpha-3/beta-1 may mediate with LGALS3 the stimulation by CSPG4 of endothelial cells migration. Integrin alpha-V/beta-1 is a receptor for vitronectin. Beta-1 integrins recognize the sequence R-G-D in a wide array of ligands. When associated with alpha-7/beta-1 integrin, regulates cell adhesion and laminin matrix deposition. Involved in promoting endothelial cell motility and angiogenesis. Involved in osteoblast compaction through the fibronectin fibrillogenesis cell-mediated matrix assembly process and the formation of mineralized bone nodules. May be involved in up-regulation of the activity of kinases such as PKC via binding to KRT1. Together with KRT1 and RACK1, serves as a platform for SRC activation or inactivation. Plays a mechanistic adhesive role during telophase, required for the successful completion of cytokinesis (By similarity). ITGA4:ITGB1 binds to fractalkine (CX3CL1) and may act as its coreceptor in CX3CR1-dependent fractalkine signaling. ITGA4:ITGB1 and ITGA5:ITGB1 bind to PLA2G2A via a site (site 2) which is distinct from the classical ligand-binding site (site 1) and this induces integrin conformational changes and enhanced ligand binding to site 1. ITGA5:ITGB1 acts as a receptor for fibrillin-1 (FBN1) and mediates R-G-D-dependent cell adhesion to FBN1. ITGA5:ITGB1 is a receptor for IL1B and binding is essential for IL1B signaling (By similarity). ITGA5:ITGB3 is a receptor for soluble CD40LG and is required for CD40/CD40LG signaling (By similarity). Plays an important role in myoblast differentiation and fusion during skeletal myogenesis (By similarity). ITGA9:ITGB1 may play a crucial role in SVEP1/polydom-mediated myoblast cell adhesion (By similarity). Integrins ITGA9:ITGB1 and ITGA4:ITGB1 repress PRKCA-mediated L-type voltage-gated channel Ca(2+) influx and ROCK-mediated calcium sensitivity in vascular smooth muscle cells via their interaction with SVEP1, thereby inhibit vasocontraction (By similarity).</text>
</comment>
<comment type="subunit">
    <text evidence="3 4 5">Interacts with seprase FAP (seprase); the interaction occurs at the cell surface of invadopodia membrane in a collagen-dependent manner (By similarity). Heterodimer of an alpha and a beta subunit. Beta-1 associates with either alpha-1, alpha-2, alpha-3, alpha-4, alpha-5, alpha-6, alpha-7, alpha-8, alpha-9, alpha-10, alpha-11 or alpha-V. ITGA6:ITGB1 is found in a complex with CD9; interaction takes place in oocytes and is involved in sperm-egg fusion. Binds LGALS3BP and NMRK2, when associated with alpha-7, but not with alpha-5. Interacts with FLNA, FLNB, FLNC and RANBP9. Interacts with KRT1 in the presence of RACK1 and SRC. Interacts with JAML; integrin alpha-4/beta-1 may regulate leukocyte to endothelial cells adhesion by controlling JAML homodimerization. Interacts with RAB21. Interacts (via the cytoplasmic region) with RAB25 (via the hypervariable C-terminal region). Interacts with MYO10. Interacts with ITGB1BP1 (via C-terminal region); the interaction is a prerequisite for focal adhesion disassembly. Interacts with TLN1; the interaction is prevented by competitive binding of ITGB1BP1. Interacts with ACAP1; required for ITGB1 recycling. Interacts with ASAP3. Interacts with FERMT2; the interaction is inhibited in presence of ITGB1BP1. Interacts with DAB2. Interacts with FGR and HCK. Interacts with alpha-7A and alpha-7B in adult skeletal muscle. Interacts with alpha-7B in cardiomyocytes of adult heart. Interacts with EMP2; the interaction may be direct or indirect and ITGB1 has a heterodimer form (By similarity). ITGA5:ITGB1 interacts with CCN3 (By similarity). ITGA4:ITGB1 is found in a ternary complex with CX3CR1 and CX3CL1 (By similarity). ITGA5:ITGB1 interacts with FBN1 (By similarity). ITGA5:ITGB1 acts as a receptor for fibronectin FN1 and mediates R-G-D-dependent cell adhesion to FN1 (By similarity). ITGA5:ITGB1 interacts with IL1B. Interacts with MDK. ITGA4:ITGB1 interacts with MDK; this interaction mediates MDK-induced osteoblast cells migration through PXN phosphorylation. ITGA6:ITGB1 interacts with MDK; this interaction mediates MDK-induced neurite-outgrowth (By similarity). ITGA5:ITGB1 interacts with ACE2 (By similarity). Interacts with TMEM182 and LAMB1 (By similarity). Interacts with tensin TNS3; TNS3 also interacts with PEAK1, thus acting as an adapter molecule to bridge the association of PEAK1 with ITGB1 (By similarity). Interacts with tensin TNS4; the interaction displaces tensin TNS3 from the ITGB1 cytoplasmic tail and promotes ITGB1 stability (By similarity). Integrin ITGA9:ITGB1 interacts with SPP1/OPN (via N-terminus) (By similarity). Integrin ITGA9:ITGB1 interacts with TNC/TNFN3 (via the 3rd Fibronectin type-III domain) (By similarity). Integrins ITGA4:ITGB1 and ITGA9:ITGB1 interact with SVEP1 (via Sushi domain 21); thereby inhibit Ca(2+) intracellular signaling and as a result repress vasocontraction (By similarity). ITGA4:ITGB1 and ITGA5:ITGB1 interacts with SELP (By similarity). Interacts with CD248 (By similarity). ITGA5:ITGB1 interacts with IGFBP1 (By similarity). ITGA4:ITGB1 interacts with BCAM (By similarity). Interacts with ADGRG6 (By similarity).</text>
</comment>
<comment type="subcellular location">
    <subcellularLocation>
        <location evidence="3">Cell membrane</location>
        <topology evidence="6">Single-pass type I membrane protein</topology>
    </subcellularLocation>
    <subcellularLocation>
        <location evidence="3">Cell projection</location>
        <location evidence="3">Invadopodium membrane</location>
        <topology evidence="6">Single-pass type I membrane protein</topology>
    </subcellularLocation>
    <subcellularLocation>
        <location evidence="3">Cell projection</location>
        <location evidence="3">Ruffle membrane</location>
        <topology evidence="6">Single-pass type I membrane protein</topology>
    </subcellularLocation>
    <subcellularLocation>
        <location evidence="3">Recycling endosome</location>
    </subcellularLocation>
    <subcellularLocation>
        <location evidence="3">Melanosome</location>
    </subcellularLocation>
    <subcellularLocation>
        <location evidence="3">Cell projection</location>
        <location evidence="3">Lamellipodium</location>
    </subcellularLocation>
    <subcellularLocation>
        <location evidence="3">Cell projection</location>
        <location evidence="3">Ruffle</location>
    </subcellularLocation>
    <subcellularLocation>
        <location evidence="3">Cell junction</location>
        <location evidence="3">Focal adhesion</location>
    </subcellularLocation>
    <text evidence="3">Enriched preferentially at invadopodia, cell membrane protrusions that correspond to sites of cell invasion, in a collagen-dependent manner. Localized at plasma and ruffle membranes in a collagen-independent manner. Colocalizes with ITGB1BP1 and metastatic suppressor protein NME2 at the edge or peripheral ruffles and lamellipodia during the early stages of cell spreading on fibronectin or collagen. Translocates from peripheral focal adhesions to fibrillar adhesions in an ITGB1BP1-dependent manner.</text>
</comment>
<comment type="domain">
    <text evidence="3">The VWFA domain (or beta I domain) contains three cation-binding sites: the ligand-associated metal ion-binding site (LIMBS or SyMBS), the metal ion-dependent adhesion site (MIDAS), and the adjacent MIDAS site (ADMIDAS). This domain is also part of the ligand-binding site.</text>
</comment>
<comment type="similarity">
    <text evidence="9">Belongs to the integrin beta chain family.</text>
</comment>
<protein>
    <recommendedName>
        <fullName>Integrin beta-1</fullName>
    </recommendedName>
    <alternativeName>
        <fullName>Fibronectin receptor subunit beta</fullName>
    </alternativeName>
    <alternativeName>
        <fullName>VLA-4 subunit beta</fullName>
    </alternativeName>
    <cdAntigenName>CD29</cdAntigenName>
</protein>
<organism>
    <name type="scientific">Pongo abelii</name>
    <name type="common">Sumatran orangutan</name>
    <name type="synonym">Pongo pygmaeus abelii</name>
    <dbReference type="NCBI Taxonomy" id="9601"/>
    <lineage>
        <taxon>Eukaryota</taxon>
        <taxon>Metazoa</taxon>
        <taxon>Chordata</taxon>
        <taxon>Craniata</taxon>
        <taxon>Vertebrata</taxon>
        <taxon>Euteleostomi</taxon>
        <taxon>Mammalia</taxon>
        <taxon>Eutheria</taxon>
        <taxon>Euarchontoglires</taxon>
        <taxon>Primates</taxon>
        <taxon>Haplorrhini</taxon>
        <taxon>Catarrhini</taxon>
        <taxon>Hominidae</taxon>
        <taxon>Pongo</taxon>
    </lineage>
</organism>
<accession>Q5RCA9</accession>
<gene>
    <name type="primary">ITGB1</name>
</gene>
<dbReference type="EMBL" id="CR858368">
    <property type="protein sequence ID" value="CAH90598.1"/>
    <property type="molecule type" value="mRNA"/>
</dbReference>
<dbReference type="RefSeq" id="NP_001125324.1">
    <property type="nucleotide sequence ID" value="NM_001131852.1"/>
</dbReference>
<dbReference type="SMR" id="Q5RCA9"/>
<dbReference type="FunCoup" id="Q5RCA9">
    <property type="interactions" value="2251"/>
</dbReference>
<dbReference type="STRING" id="9601.ENSPPYP00000002560"/>
<dbReference type="GlyCosmos" id="Q5RCA9">
    <property type="glycosylation" value="12 sites, No reported glycans"/>
</dbReference>
<dbReference type="GeneID" id="100172223"/>
<dbReference type="KEGG" id="pon:100172223"/>
<dbReference type="CTD" id="3688"/>
<dbReference type="eggNOG" id="KOG1226">
    <property type="taxonomic scope" value="Eukaryota"/>
</dbReference>
<dbReference type="InParanoid" id="Q5RCA9"/>
<dbReference type="OrthoDB" id="410592at2759"/>
<dbReference type="Proteomes" id="UP000001595">
    <property type="component" value="Unplaced"/>
</dbReference>
<dbReference type="GO" id="GO:0009986">
    <property type="term" value="C:cell surface"/>
    <property type="evidence" value="ECO:0000250"/>
    <property type="project" value="UniProtKB"/>
</dbReference>
<dbReference type="GO" id="GO:0005925">
    <property type="term" value="C:focal adhesion"/>
    <property type="evidence" value="ECO:0000250"/>
    <property type="project" value="UniProtKB"/>
</dbReference>
<dbReference type="GO" id="GO:0034679">
    <property type="term" value="C:integrin alpha9-beta1 complex"/>
    <property type="evidence" value="ECO:0000250"/>
    <property type="project" value="UniProtKB"/>
</dbReference>
<dbReference type="GO" id="GO:0030027">
    <property type="term" value="C:lamellipodium"/>
    <property type="evidence" value="ECO:0007669"/>
    <property type="project" value="UniProtKB-SubCell"/>
</dbReference>
<dbReference type="GO" id="GO:0042470">
    <property type="term" value="C:melanosome"/>
    <property type="evidence" value="ECO:0007669"/>
    <property type="project" value="UniProtKB-SubCell"/>
</dbReference>
<dbReference type="GO" id="GO:0016020">
    <property type="term" value="C:membrane"/>
    <property type="evidence" value="ECO:0000250"/>
    <property type="project" value="UniProtKB"/>
</dbReference>
<dbReference type="GO" id="GO:0055037">
    <property type="term" value="C:recycling endosome"/>
    <property type="evidence" value="ECO:0007669"/>
    <property type="project" value="UniProtKB-SubCell"/>
</dbReference>
<dbReference type="GO" id="GO:0032587">
    <property type="term" value="C:ruffle membrane"/>
    <property type="evidence" value="ECO:0007669"/>
    <property type="project" value="UniProtKB-SubCell"/>
</dbReference>
<dbReference type="GO" id="GO:0045202">
    <property type="term" value="C:synapse"/>
    <property type="evidence" value="ECO:0007669"/>
    <property type="project" value="TreeGrafter"/>
</dbReference>
<dbReference type="GO" id="GO:0019960">
    <property type="term" value="F:C-X3-C chemokine binding"/>
    <property type="evidence" value="ECO:0007669"/>
    <property type="project" value="TreeGrafter"/>
</dbReference>
<dbReference type="GO" id="GO:0098639">
    <property type="term" value="F:collagen binding involved in cell-matrix adhesion"/>
    <property type="evidence" value="ECO:0007669"/>
    <property type="project" value="TreeGrafter"/>
</dbReference>
<dbReference type="GO" id="GO:0001968">
    <property type="term" value="F:fibronectin binding"/>
    <property type="evidence" value="ECO:0007669"/>
    <property type="project" value="TreeGrafter"/>
</dbReference>
<dbReference type="GO" id="GO:0098640">
    <property type="term" value="F:integrin binding involved in cell-matrix adhesion"/>
    <property type="evidence" value="ECO:0000250"/>
    <property type="project" value="UniProtKB"/>
</dbReference>
<dbReference type="GO" id="GO:0043236">
    <property type="term" value="F:laminin binding"/>
    <property type="evidence" value="ECO:0007669"/>
    <property type="project" value="TreeGrafter"/>
</dbReference>
<dbReference type="GO" id="GO:0046872">
    <property type="term" value="F:metal ion binding"/>
    <property type="evidence" value="ECO:0007669"/>
    <property type="project" value="UniProtKB-KW"/>
</dbReference>
<dbReference type="GO" id="GO:0046982">
    <property type="term" value="F:protein heterodimerization activity"/>
    <property type="evidence" value="ECO:0000250"/>
    <property type="project" value="UniProtKB"/>
</dbReference>
<dbReference type="GO" id="GO:0019901">
    <property type="term" value="F:protein kinase binding"/>
    <property type="evidence" value="ECO:0007669"/>
    <property type="project" value="TreeGrafter"/>
</dbReference>
<dbReference type="GO" id="GO:0033627">
    <property type="term" value="P:cell adhesion mediated by integrin"/>
    <property type="evidence" value="ECO:0000250"/>
    <property type="project" value="UniProtKB"/>
</dbReference>
<dbReference type="GO" id="GO:0016477">
    <property type="term" value="P:cell migration"/>
    <property type="evidence" value="ECO:0007669"/>
    <property type="project" value="TreeGrafter"/>
</dbReference>
<dbReference type="GO" id="GO:0098609">
    <property type="term" value="P:cell-cell adhesion"/>
    <property type="evidence" value="ECO:0007669"/>
    <property type="project" value="TreeGrafter"/>
</dbReference>
<dbReference type="GO" id="GO:0071404">
    <property type="term" value="P:cellular response to low-density lipoprotein particle stimulus"/>
    <property type="evidence" value="ECO:0000250"/>
    <property type="project" value="UniProtKB"/>
</dbReference>
<dbReference type="GO" id="GO:0007229">
    <property type="term" value="P:integrin-mediated signaling pathway"/>
    <property type="evidence" value="ECO:0007669"/>
    <property type="project" value="UniProtKB-KW"/>
</dbReference>
<dbReference type="GO" id="GO:0007517">
    <property type="term" value="P:muscle organ development"/>
    <property type="evidence" value="ECO:0007669"/>
    <property type="project" value="UniProtKB-KW"/>
</dbReference>
<dbReference type="GO" id="GO:0045445">
    <property type="term" value="P:myoblast differentiation"/>
    <property type="evidence" value="ECO:0000250"/>
    <property type="project" value="UniProtKB"/>
</dbReference>
<dbReference type="GO" id="GO:0007520">
    <property type="term" value="P:myoblast fusion"/>
    <property type="evidence" value="ECO:0000250"/>
    <property type="project" value="UniProtKB"/>
</dbReference>
<dbReference type="GO" id="GO:0045906">
    <property type="term" value="P:negative regulation of vasoconstriction"/>
    <property type="evidence" value="ECO:0000250"/>
    <property type="project" value="UniProtKB"/>
</dbReference>
<dbReference type="GO" id="GO:0030335">
    <property type="term" value="P:positive regulation of cell migration"/>
    <property type="evidence" value="ECO:0000250"/>
    <property type="project" value="UniProtKB"/>
</dbReference>
<dbReference type="GO" id="GO:1903078">
    <property type="term" value="P:positive regulation of protein localization to plasma membrane"/>
    <property type="evidence" value="ECO:0000250"/>
    <property type="project" value="UniProtKB"/>
</dbReference>
<dbReference type="GO" id="GO:0031623">
    <property type="term" value="P:receptor internalization"/>
    <property type="evidence" value="ECO:0000250"/>
    <property type="project" value="UniProtKB"/>
</dbReference>
<dbReference type="GO" id="GO:0010710">
    <property type="term" value="P:regulation of collagen catabolic process"/>
    <property type="evidence" value="ECO:0000250"/>
    <property type="project" value="UniProtKB"/>
</dbReference>
<dbReference type="FunFam" id="1.20.5.100:FF:000002">
    <property type="entry name" value="Integrin beta"/>
    <property type="match status" value="1"/>
</dbReference>
<dbReference type="FunFam" id="2.10.25.10:FF:000043">
    <property type="entry name" value="Integrin beta"/>
    <property type="match status" value="1"/>
</dbReference>
<dbReference type="FunFam" id="2.10.25.10:FF:000075">
    <property type="entry name" value="Integrin beta"/>
    <property type="match status" value="1"/>
</dbReference>
<dbReference type="FunFam" id="2.10.25.10:FF:000155">
    <property type="entry name" value="Integrin beta"/>
    <property type="match status" value="1"/>
</dbReference>
<dbReference type="FunFam" id="2.60.40.1510:FF:000003">
    <property type="entry name" value="Integrin beta"/>
    <property type="match status" value="1"/>
</dbReference>
<dbReference type="FunFam" id="3.30.1680.10:FF:000005">
    <property type="entry name" value="Integrin beta"/>
    <property type="match status" value="1"/>
</dbReference>
<dbReference type="FunFam" id="3.40.50.410:FF:000002">
    <property type="entry name" value="Integrin beta"/>
    <property type="match status" value="1"/>
</dbReference>
<dbReference type="FunFam" id="4.10.1240.30:FF:000002">
    <property type="entry name" value="Integrin beta"/>
    <property type="match status" value="1"/>
</dbReference>
<dbReference type="Gene3D" id="4.10.1240.30">
    <property type="match status" value="1"/>
</dbReference>
<dbReference type="Gene3D" id="1.20.5.100">
    <property type="entry name" value="Cytochrome c1, transmembrane anchor, C-terminal"/>
    <property type="match status" value="1"/>
</dbReference>
<dbReference type="Gene3D" id="2.10.25.10">
    <property type="entry name" value="Laminin"/>
    <property type="match status" value="4"/>
</dbReference>
<dbReference type="Gene3D" id="3.30.1680.10">
    <property type="entry name" value="ligand-binding face of the semaphorins, domain 2"/>
    <property type="match status" value="1"/>
</dbReference>
<dbReference type="Gene3D" id="2.60.40.1510">
    <property type="entry name" value="ntegrin, alpha v. Chain A, domain 3"/>
    <property type="match status" value="1"/>
</dbReference>
<dbReference type="Gene3D" id="3.40.50.410">
    <property type="entry name" value="von Willebrand factor, type A domain"/>
    <property type="match status" value="1"/>
</dbReference>
<dbReference type="InterPro" id="IPR013111">
    <property type="entry name" value="EGF_extracell"/>
</dbReference>
<dbReference type="InterPro" id="IPR040622">
    <property type="entry name" value="I-EGF_1"/>
</dbReference>
<dbReference type="InterPro" id="IPR033760">
    <property type="entry name" value="Integrin_beta_N"/>
</dbReference>
<dbReference type="InterPro" id="IPR015812">
    <property type="entry name" value="Integrin_bsu"/>
</dbReference>
<dbReference type="InterPro" id="IPR014836">
    <property type="entry name" value="Integrin_bsu_cyt_dom"/>
</dbReference>
<dbReference type="InterPro" id="IPR012896">
    <property type="entry name" value="Integrin_bsu_tail"/>
</dbReference>
<dbReference type="InterPro" id="IPR036349">
    <property type="entry name" value="Integrin_bsu_tail_dom_sf"/>
</dbReference>
<dbReference type="InterPro" id="IPR002369">
    <property type="entry name" value="Integrin_bsu_VWA"/>
</dbReference>
<dbReference type="InterPro" id="IPR032695">
    <property type="entry name" value="Integrin_dom_sf"/>
</dbReference>
<dbReference type="InterPro" id="IPR016201">
    <property type="entry name" value="PSI"/>
</dbReference>
<dbReference type="InterPro" id="IPR036465">
    <property type="entry name" value="vWFA_dom_sf"/>
</dbReference>
<dbReference type="PANTHER" id="PTHR10082">
    <property type="entry name" value="INTEGRIN BETA SUBUNIT"/>
    <property type="match status" value="1"/>
</dbReference>
<dbReference type="PANTHER" id="PTHR10082:SF28">
    <property type="entry name" value="INTEGRIN BETA-1"/>
    <property type="match status" value="1"/>
</dbReference>
<dbReference type="Pfam" id="PF07974">
    <property type="entry name" value="EGF_2"/>
    <property type="match status" value="1"/>
</dbReference>
<dbReference type="Pfam" id="PF23105">
    <property type="entry name" value="EGF_integrin"/>
    <property type="match status" value="1"/>
</dbReference>
<dbReference type="Pfam" id="PF18372">
    <property type="entry name" value="I-EGF_1"/>
    <property type="match status" value="1"/>
</dbReference>
<dbReference type="Pfam" id="PF08725">
    <property type="entry name" value="Integrin_b_cyt"/>
    <property type="match status" value="1"/>
</dbReference>
<dbReference type="Pfam" id="PF07965">
    <property type="entry name" value="Integrin_B_tail"/>
    <property type="match status" value="1"/>
</dbReference>
<dbReference type="Pfam" id="PF00362">
    <property type="entry name" value="Integrin_beta"/>
    <property type="match status" value="1"/>
</dbReference>
<dbReference type="Pfam" id="PF17205">
    <property type="entry name" value="PSI_integrin"/>
    <property type="match status" value="1"/>
</dbReference>
<dbReference type="PIRSF" id="PIRSF002512">
    <property type="entry name" value="Integrin_B"/>
    <property type="match status" value="1"/>
</dbReference>
<dbReference type="PRINTS" id="PR01186">
    <property type="entry name" value="INTEGRINB"/>
</dbReference>
<dbReference type="SMART" id="SM00187">
    <property type="entry name" value="INB"/>
    <property type="match status" value="1"/>
</dbReference>
<dbReference type="SMART" id="SM01241">
    <property type="entry name" value="Integrin_b_cyt"/>
    <property type="match status" value="1"/>
</dbReference>
<dbReference type="SMART" id="SM01242">
    <property type="entry name" value="Integrin_B_tail"/>
    <property type="match status" value="1"/>
</dbReference>
<dbReference type="SMART" id="SM00423">
    <property type="entry name" value="PSI"/>
    <property type="match status" value="1"/>
</dbReference>
<dbReference type="SUPFAM" id="SSF57196">
    <property type="entry name" value="EGF/Laminin"/>
    <property type="match status" value="2"/>
</dbReference>
<dbReference type="SUPFAM" id="SSF69687">
    <property type="entry name" value="Integrin beta tail domain"/>
    <property type="match status" value="1"/>
</dbReference>
<dbReference type="SUPFAM" id="SSF69179">
    <property type="entry name" value="Integrin domains"/>
    <property type="match status" value="1"/>
</dbReference>
<dbReference type="SUPFAM" id="SSF103575">
    <property type="entry name" value="Plexin repeat"/>
    <property type="match status" value="1"/>
</dbReference>
<dbReference type="SUPFAM" id="SSF53300">
    <property type="entry name" value="vWA-like"/>
    <property type="match status" value="1"/>
</dbReference>
<dbReference type="PROSITE" id="PS00022">
    <property type="entry name" value="EGF_1"/>
    <property type="match status" value="2"/>
</dbReference>
<dbReference type="PROSITE" id="PS00243">
    <property type="entry name" value="I_EGF_1"/>
    <property type="match status" value="3"/>
</dbReference>
<dbReference type="PROSITE" id="PS52047">
    <property type="entry name" value="I_EGF_2"/>
    <property type="match status" value="4"/>
</dbReference>
<sequence length="798" mass="88385">MNLQPIFWIGLISSICCVFAQTDENRCLKANAKSCGECIQAGPNCGWCTNSTFLQEGMPTSARCDDLEALKKKGCPPDDIENPRGSKDIKKNKNVTNRSKGTAEKLKPEDITQIQPQQLVLRLRSGEPQTFTLKFKRAEDYPIDLYYLMDLSYSMKDDLENVKSLGTDLMNEMRRITSDFRIGFGSFVEKTVMPYISTTPVKLRNPCTSEQNCTSPFSYKNVLSLTNKGEVFNELVGKQRISGNLDSPEGGFDAIMQVAVCGSLIGRRNVTRLLVFSTDAGFHFAGDGKLGGIVLPNDGQCHLENNMYTMSHYYDYPSIAHLVQKLSENNIQTIFAVTEEFQPVYKELKNLIPKSAVGTLSANSSNVIQLIIDAYNSLSSEVILENSKLSEGVTISYKSYCKNGVNGTGENGRKCSNISIGDEVQFEISITSNKCPKKDSDSFKIRPLGFTEEVEVILQYICECECQSEGIPESPKCHEGNGTFECGACRCNEGRVGRHCECSTDEVNSEDMDAYCRKENSSEICSNNGECVCGQCVCRKRDNTNEIYSGKFCECDNFNCDRSNGLICGGNGVCKCRVCECNPNYTGSACDCSLDTSTCEASNGQICNGRGICECGVCKCTDPKFQGQTCEMCQTCLGVCAGHKECVQCRAFNKGEKKDTCTQECSYFNITKVESRDKLPQPVQPDPVSHCKEKDVDDCWFYFTYSVNGNNEVMVHVVENPECPTGPDIIPIVAGVVAGIVLIGLALLLIWKLLMIIHDRREFAKFEKEKMNAKWDTGENPIYKSAVTTVVNPKYEGK</sequence>
<reference key="1">
    <citation type="submission" date="2004-11" db="EMBL/GenBank/DDBJ databases">
        <authorList>
            <consortium name="The German cDNA consortium"/>
        </authorList>
    </citation>
    <scope>NUCLEOTIDE SEQUENCE [LARGE SCALE MRNA]</scope>
    <source>
        <tissue>Kidney</tissue>
    </source>
</reference>
<proteinExistence type="evidence at transcript level"/>
<name>ITB1_PONAB</name>